<feature type="chain" id="PRO_1000000051" description="Aspartate carbamoyltransferase regulatory chain">
    <location>
        <begin position="1"/>
        <end position="153"/>
    </location>
</feature>
<feature type="binding site" evidence="1">
    <location>
        <position position="109"/>
    </location>
    <ligand>
        <name>Zn(2+)</name>
        <dbReference type="ChEBI" id="CHEBI:29105"/>
    </ligand>
</feature>
<feature type="binding site" evidence="1">
    <location>
        <position position="114"/>
    </location>
    <ligand>
        <name>Zn(2+)</name>
        <dbReference type="ChEBI" id="CHEBI:29105"/>
    </ligand>
</feature>
<feature type="binding site" evidence="1">
    <location>
        <position position="138"/>
    </location>
    <ligand>
        <name>Zn(2+)</name>
        <dbReference type="ChEBI" id="CHEBI:29105"/>
    </ligand>
</feature>
<feature type="binding site" evidence="1">
    <location>
        <position position="141"/>
    </location>
    <ligand>
        <name>Zn(2+)</name>
        <dbReference type="ChEBI" id="CHEBI:29105"/>
    </ligand>
</feature>
<name>PYRI_SHISS</name>
<evidence type="ECO:0000255" key="1">
    <source>
        <dbReference type="HAMAP-Rule" id="MF_00002"/>
    </source>
</evidence>
<protein>
    <recommendedName>
        <fullName evidence="1">Aspartate carbamoyltransferase regulatory chain</fullName>
    </recommendedName>
</protein>
<keyword id="KW-0479">Metal-binding</keyword>
<keyword id="KW-0665">Pyrimidine biosynthesis</keyword>
<keyword id="KW-1185">Reference proteome</keyword>
<keyword id="KW-0862">Zinc</keyword>
<organism>
    <name type="scientific">Shigella sonnei (strain Ss046)</name>
    <dbReference type="NCBI Taxonomy" id="300269"/>
    <lineage>
        <taxon>Bacteria</taxon>
        <taxon>Pseudomonadati</taxon>
        <taxon>Pseudomonadota</taxon>
        <taxon>Gammaproteobacteria</taxon>
        <taxon>Enterobacterales</taxon>
        <taxon>Enterobacteriaceae</taxon>
        <taxon>Shigella</taxon>
    </lineage>
</organism>
<reference key="1">
    <citation type="journal article" date="2005" name="Nucleic Acids Res.">
        <title>Genome dynamics and diversity of Shigella species, the etiologic agents of bacillary dysentery.</title>
        <authorList>
            <person name="Yang F."/>
            <person name="Yang J."/>
            <person name="Zhang X."/>
            <person name="Chen L."/>
            <person name="Jiang Y."/>
            <person name="Yan Y."/>
            <person name="Tang X."/>
            <person name="Wang J."/>
            <person name="Xiong Z."/>
            <person name="Dong J."/>
            <person name="Xue Y."/>
            <person name="Zhu Y."/>
            <person name="Xu X."/>
            <person name="Sun L."/>
            <person name="Chen S."/>
            <person name="Nie H."/>
            <person name="Peng J."/>
            <person name="Xu J."/>
            <person name="Wang Y."/>
            <person name="Yuan Z."/>
            <person name="Wen Y."/>
            <person name="Yao Z."/>
            <person name="Shen Y."/>
            <person name="Qiang B."/>
            <person name="Hou Y."/>
            <person name="Yu J."/>
            <person name="Jin Q."/>
        </authorList>
    </citation>
    <scope>NUCLEOTIDE SEQUENCE [LARGE SCALE GENOMIC DNA]</scope>
    <source>
        <strain>Ss046</strain>
    </source>
</reference>
<accession>Q3YUA7</accession>
<dbReference type="EMBL" id="CP000038">
    <property type="protein sequence ID" value="AAZ90905.1"/>
    <property type="molecule type" value="Genomic_DNA"/>
</dbReference>
<dbReference type="RefSeq" id="WP_000148581.1">
    <property type="nucleotide sequence ID" value="NC_007384.1"/>
</dbReference>
<dbReference type="SMR" id="Q3YUA7"/>
<dbReference type="GeneID" id="93777580"/>
<dbReference type="KEGG" id="ssn:SSON_4425"/>
<dbReference type="HOGENOM" id="CLU_128576_0_0_6"/>
<dbReference type="Proteomes" id="UP000002529">
    <property type="component" value="Chromosome"/>
</dbReference>
<dbReference type="GO" id="GO:0009347">
    <property type="term" value="C:aspartate carbamoyltransferase complex"/>
    <property type="evidence" value="ECO:0007669"/>
    <property type="project" value="InterPro"/>
</dbReference>
<dbReference type="GO" id="GO:0046872">
    <property type="term" value="F:metal ion binding"/>
    <property type="evidence" value="ECO:0007669"/>
    <property type="project" value="UniProtKB-KW"/>
</dbReference>
<dbReference type="GO" id="GO:0006207">
    <property type="term" value="P:'de novo' pyrimidine nucleobase biosynthetic process"/>
    <property type="evidence" value="ECO:0007669"/>
    <property type="project" value="InterPro"/>
</dbReference>
<dbReference type="GO" id="GO:0006221">
    <property type="term" value="P:pyrimidine nucleotide biosynthetic process"/>
    <property type="evidence" value="ECO:0007669"/>
    <property type="project" value="UniProtKB-UniRule"/>
</dbReference>
<dbReference type="FunFam" id="2.30.30.20:FF:000001">
    <property type="entry name" value="Aspartate carbamoyltransferase regulatory chain"/>
    <property type="match status" value="1"/>
</dbReference>
<dbReference type="FunFam" id="3.30.70.140:FF:000001">
    <property type="entry name" value="Aspartate carbamoyltransferase regulatory chain"/>
    <property type="match status" value="1"/>
</dbReference>
<dbReference type="Gene3D" id="2.30.30.20">
    <property type="entry name" value="Aspartate carbamoyltransferase regulatory subunit, C-terminal domain"/>
    <property type="match status" value="1"/>
</dbReference>
<dbReference type="Gene3D" id="3.30.70.140">
    <property type="entry name" value="Aspartate carbamoyltransferase regulatory subunit, N-terminal domain"/>
    <property type="match status" value="1"/>
</dbReference>
<dbReference type="HAMAP" id="MF_00002">
    <property type="entry name" value="Asp_carb_tr_reg"/>
    <property type="match status" value="1"/>
</dbReference>
<dbReference type="InterPro" id="IPR020545">
    <property type="entry name" value="Asp_carbamoyltransf_reg_N"/>
</dbReference>
<dbReference type="InterPro" id="IPR002801">
    <property type="entry name" value="Asp_carbamoylTrfase_reg"/>
</dbReference>
<dbReference type="InterPro" id="IPR020542">
    <property type="entry name" value="Asp_carbamoyltrfase_reg_C"/>
</dbReference>
<dbReference type="InterPro" id="IPR036792">
    <property type="entry name" value="Asp_carbatrfase_reg_C_sf"/>
</dbReference>
<dbReference type="InterPro" id="IPR036793">
    <property type="entry name" value="Asp_carbatrfase_reg_N_sf"/>
</dbReference>
<dbReference type="NCBIfam" id="TIGR00240">
    <property type="entry name" value="ATCase_reg"/>
    <property type="match status" value="1"/>
</dbReference>
<dbReference type="PANTHER" id="PTHR35805">
    <property type="entry name" value="ASPARTATE CARBAMOYLTRANSFERASE REGULATORY CHAIN"/>
    <property type="match status" value="1"/>
</dbReference>
<dbReference type="PANTHER" id="PTHR35805:SF1">
    <property type="entry name" value="ASPARTATE CARBAMOYLTRANSFERASE REGULATORY CHAIN"/>
    <property type="match status" value="1"/>
</dbReference>
<dbReference type="Pfam" id="PF01948">
    <property type="entry name" value="PyrI"/>
    <property type="match status" value="1"/>
</dbReference>
<dbReference type="Pfam" id="PF02748">
    <property type="entry name" value="PyrI_C"/>
    <property type="match status" value="1"/>
</dbReference>
<dbReference type="SUPFAM" id="SSF57825">
    <property type="entry name" value="Aspartate carbamoyltransferase, Regulatory-chain, C-terminal domain"/>
    <property type="match status" value="1"/>
</dbReference>
<dbReference type="SUPFAM" id="SSF54893">
    <property type="entry name" value="Aspartate carbamoyltransferase, Regulatory-chain, N-terminal domain"/>
    <property type="match status" value="1"/>
</dbReference>
<proteinExistence type="inferred from homology"/>
<sequence>MTHDNKLQVEAIKRGTVIDHIPAQIGFKLLSLFKLTETDQRITIGLNLPSGEMGRKDLIKIENTFLSEDQVDQLALYAPQATVNRIDNYEVVGKSRPSLPERIDNVLVCPNSNCISHAEPVSSSFAVRKRANDIALKCKYCEKEFSHNVVLAN</sequence>
<gene>
    <name evidence="1" type="primary">pyrI</name>
    <name type="ordered locus">SSON_4425</name>
</gene>
<comment type="function">
    <text evidence="1">Involved in allosteric regulation of aspartate carbamoyltransferase.</text>
</comment>
<comment type="cofactor">
    <cofactor evidence="1">
        <name>Zn(2+)</name>
        <dbReference type="ChEBI" id="CHEBI:29105"/>
    </cofactor>
    <text evidence="1">Binds 1 zinc ion per subunit.</text>
</comment>
<comment type="subunit">
    <text evidence="1">Contains catalytic and regulatory chains.</text>
</comment>
<comment type="similarity">
    <text evidence="1">Belongs to the PyrI family.</text>
</comment>